<comment type="function">
    <text evidence="1">Channel that opens in response to stretch forces in the membrane lipid bilayer. May participate in the regulation of osmotic pressure changes within the cell.</text>
</comment>
<comment type="subunit">
    <text evidence="1">Homopentamer.</text>
</comment>
<comment type="subcellular location">
    <subcellularLocation>
        <location evidence="1">Cell inner membrane</location>
        <topology evidence="1">Multi-pass membrane protein</topology>
    </subcellularLocation>
</comment>
<comment type="similarity">
    <text evidence="1 2">Belongs to the MscL family.</text>
</comment>
<feature type="chain" id="PRO_0000192454" description="Large-conductance mechanosensitive channel">
    <location>
        <begin position="1"/>
        <end position="137"/>
    </location>
</feature>
<feature type="transmembrane region" description="Helical" evidence="1">
    <location>
        <begin position="9"/>
        <end position="29"/>
    </location>
</feature>
<feature type="transmembrane region" description="Helical" evidence="1">
    <location>
        <begin position="79"/>
        <end position="99"/>
    </location>
</feature>
<proteinExistence type="inferred from homology"/>
<keyword id="KW-0997">Cell inner membrane</keyword>
<keyword id="KW-1003">Cell membrane</keyword>
<keyword id="KW-0407">Ion channel</keyword>
<keyword id="KW-0406">Ion transport</keyword>
<keyword id="KW-0472">Membrane</keyword>
<keyword id="KW-1185">Reference proteome</keyword>
<keyword id="KW-0812">Transmembrane</keyword>
<keyword id="KW-1133">Transmembrane helix</keyword>
<keyword id="KW-0813">Transport</keyword>
<protein>
    <recommendedName>
        <fullName evidence="1">Large-conductance mechanosensitive channel</fullName>
    </recommendedName>
</protein>
<reference key="1">
    <citation type="journal article" date="2000" name="Nature">
        <title>Complete genome sequence of Pseudomonas aeruginosa PAO1, an opportunistic pathogen.</title>
        <authorList>
            <person name="Stover C.K."/>
            <person name="Pham X.-Q.T."/>
            <person name="Erwin A.L."/>
            <person name="Mizoguchi S.D."/>
            <person name="Warrener P."/>
            <person name="Hickey M.J."/>
            <person name="Brinkman F.S.L."/>
            <person name="Hufnagle W.O."/>
            <person name="Kowalik D.J."/>
            <person name="Lagrou M."/>
            <person name="Garber R.L."/>
            <person name="Goltry L."/>
            <person name="Tolentino E."/>
            <person name="Westbrock-Wadman S."/>
            <person name="Yuan Y."/>
            <person name="Brody L.L."/>
            <person name="Coulter S.N."/>
            <person name="Folger K.R."/>
            <person name="Kas A."/>
            <person name="Larbig K."/>
            <person name="Lim R.M."/>
            <person name="Smith K.A."/>
            <person name="Spencer D.H."/>
            <person name="Wong G.K.-S."/>
            <person name="Wu Z."/>
            <person name="Paulsen I.T."/>
            <person name="Reizer J."/>
            <person name="Saier M.H. Jr."/>
            <person name="Hancock R.E.W."/>
            <person name="Lory S."/>
            <person name="Olson M.V."/>
        </authorList>
    </citation>
    <scope>NUCLEOTIDE SEQUENCE [LARGE SCALE GENOMIC DNA]</scope>
    <source>
        <strain>ATCC 15692 / DSM 22644 / CIP 104116 / JCM 14847 / LMG 12228 / 1C / PRS 101 / PAO1</strain>
    </source>
</reference>
<evidence type="ECO:0000255" key="1">
    <source>
        <dbReference type="HAMAP-Rule" id="MF_00115"/>
    </source>
</evidence>
<evidence type="ECO:0000305" key="2"/>
<gene>
    <name evidence="1" type="primary">mscL</name>
    <name type="ordered locus">PA4614</name>
</gene>
<dbReference type="EMBL" id="AE004091">
    <property type="protein sequence ID" value="AAG08002.1"/>
    <property type="molecule type" value="Genomic_DNA"/>
</dbReference>
<dbReference type="PIR" id="F83069">
    <property type="entry name" value="F83069"/>
</dbReference>
<dbReference type="RefSeq" id="NP_253304.1">
    <property type="nucleotide sequence ID" value="NC_002516.2"/>
</dbReference>
<dbReference type="RefSeq" id="WP_003104883.1">
    <property type="nucleotide sequence ID" value="NZ_QZGE01000004.1"/>
</dbReference>
<dbReference type="SMR" id="Q9HVH7"/>
<dbReference type="FunCoup" id="Q9HVH7">
    <property type="interactions" value="396"/>
</dbReference>
<dbReference type="STRING" id="208964.PA4614"/>
<dbReference type="PaxDb" id="208964-PA4614"/>
<dbReference type="DNASU" id="881127"/>
<dbReference type="GeneID" id="881127"/>
<dbReference type="KEGG" id="pae:PA4614"/>
<dbReference type="PATRIC" id="fig|208964.12.peg.4830"/>
<dbReference type="PseudoCAP" id="PA4614"/>
<dbReference type="HOGENOM" id="CLU_095787_0_0_6"/>
<dbReference type="InParanoid" id="Q9HVH7"/>
<dbReference type="OrthoDB" id="9810350at2"/>
<dbReference type="PhylomeDB" id="Q9HVH7"/>
<dbReference type="BioCyc" id="PAER208964:G1FZ6-4708-MONOMER"/>
<dbReference type="Proteomes" id="UP000002438">
    <property type="component" value="Chromosome"/>
</dbReference>
<dbReference type="GO" id="GO:0016020">
    <property type="term" value="C:membrane"/>
    <property type="evidence" value="ECO:0000318"/>
    <property type="project" value="GO_Central"/>
</dbReference>
<dbReference type="GO" id="GO:0005886">
    <property type="term" value="C:plasma membrane"/>
    <property type="evidence" value="ECO:0007669"/>
    <property type="project" value="UniProtKB-SubCell"/>
</dbReference>
<dbReference type="GO" id="GO:0008381">
    <property type="term" value="F:mechanosensitive monoatomic ion channel activity"/>
    <property type="evidence" value="ECO:0000318"/>
    <property type="project" value="GO_Central"/>
</dbReference>
<dbReference type="GO" id="GO:0006811">
    <property type="term" value="P:monoatomic ion transport"/>
    <property type="evidence" value="ECO:0000318"/>
    <property type="project" value="GO_Central"/>
</dbReference>
<dbReference type="FunFam" id="1.10.1200.120:FF:000001">
    <property type="entry name" value="Large-conductance mechanosensitive channel"/>
    <property type="match status" value="1"/>
</dbReference>
<dbReference type="Gene3D" id="1.10.1200.120">
    <property type="entry name" value="Large-conductance mechanosensitive channel, MscL, domain 1"/>
    <property type="match status" value="1"/>
</dbReference>
<dbReference type="HAMAP" id="MF_00115">
    <property type="entry name" value="MscL"/>
    <property type="match status" value="1"/>
</dbReference>
<dbReference type="InterPro" id="IPR019823">
    <property type="entry name" value="Mechanosensitive_channel_CS"/>
</dbReference>
<dbReference type="InterPro" id="IPR001185">
    <property type="entry name" value="MS_channel"/>
</dbReference>
<dbReference type="InterPro" id="IPR037673">
    <property type="entry name" value="MSC/AndL"/>
</dbReference>
<dbReference type="InterPro" id="IPR036019">
    <property type="entry name" value="MscL_channel"/>
</dbReference>
<dbReference type="NCBIfam" id="TIGR00220">
    <property type="entry name" value="mscL"/>
    <property type="match status" value="1"/>
</dbReference>
<dbReference type="NCBIfam" id="NF001843">
    <property type="entry name" value="PRK00567.1-4"/>
    <property type="match status" value="1"/>
</dbReference>
<dbReference type="PANTHER" id="PTHR30266:SF2">
    <property type="entry name" value="LARGE-CONDUCTANCE MECHANOSENSITIVE CHANNEL"/>
    <property type="match status" value="1"/>
</dbReference>
<dbReference type="PANTHER" id="PTHR30266">
    <property type="entry name" value="MECHANOSENSITIVE CHANNEL MSCL"/>
    <property type="match status" value="1"/>
</dbReference>
<dbReference type="Pfam" id="PF01741">
    <property type="entry name" value="MscL"/>
    <property type="match status" value="1"/>
</dbReference>
<dbReference type="PRINTS" id="PR01264">
    <property type="entry name" value="MECHCHANNEL"/>
</dbReference>
<dbReference type="SUPFAM" id="SSF81330">
    <property type="entry name" value="Gated mechanosensitive channel"/>
    <property type="match status" value="1"/>
</dbReference>
<dbReference type="PROSITE" id="PS01327">
    <property type="entry name" value="MSCL"/>
    <property type="match status" value="1"/>
</dbReference>
<accession>Q9HVH7</accession>
<name>MSCL_PSEAE</name>
<organism>
    <name type="scientific">Pseudomonas aeruginosa (strain ATCC 15692 / DSM 22644 / CIP 104116 / JCM 14847 / LMG 12228 / 1C / PRS 101 / PAO1)</name>
    <dbReference type="NCBI Taxonomy" id="208964"/>
    <lineage>
        <taxon>Bacteria</taxon>
        <taxon>Pseudomonadati</taxon>
        <taxon>Pseudomonadota</taxon>
        <taxon>Gammaproteobacteria</taxon>
        <taxon>Pseudomonadales</taxon>
        <taxon>Pseudomonadaceae</taxon>
        <taxon>Pseudomonas</taxon>
    </lineage>
</organism>
<sequence length="137" mass="14432">MGLLSEFKAFAVKGNVVDMAVGIIIGAAFGKIVSSFVGDVIMPPIGLLIGGVDFSDLAITLKAAEGDVPAVVLAYGKFIQTVLDFVIVAFAIFMGVKAINRLKREEAVAPSEPPVPSAEETLLTEIRDLLKAQQNKS</sequence>